<proteinExistence type="inferred from homology"/>
<sequence length="182" mass="20141">MKLADVEDHMQKSVEATQRAFNTIRTGRANTSLLDRVTVEYYGAETPLRSLANISTPDSSTIAIQPFDRNSLNLIEKAISMSDLGLTPNNDGTVIRLNIPPLTSDRRKELVKTASKLAEEGKVSIRNVRRDAVDSVKKQGKAGELSEDEVKDLQDKIQKLTDKYIAKVDGLLAEKEKDISTV</sequence>
<dbReference type="EMBL" id="CP001344">
    <property type="protein sequence ID" value="ACL46944.1"/>
    <property type="molecule type" value="Genomic_DNA"/>
</dbReference>
<dbReference type="SMR" id="B8HL79"/>
<dbReference type="STRING" id="395961.Cyan7425_4637"/>
<dbReference type="KEGG" id="cyn:Cyan7425_4637"/>
<dbReference type="eggNOG" id="COG0233">
    <property type="taxonomic scope" value="Bacteria"/>
</dbReference>
<dbReference type="HOGENOM" id="CLU_073981_2_0_3"/>
<dbReference type="OrthoDB" id="9804006at2"/>
<dbReference type="GO" id="GO:0005737">
    <property type="term" value="C:cytoplasm"/>
    <property type="evidence" value="ECO:0007669"/>
    <property type="project" value="UniProtKB-SubCell"/>
</dbReference>
<dbReference type="GO" id="GO:0043023">
    <property type="term" value="F:ribosomal large subunit binding"/>
    <property type="evidence" value="ECO:0007669"/>
    <property type="project" value="TreeGrafter"/>
</dbReference>
<dbReference type="GO" id="GO:0006415">
    <property type="term" value="P:translational termination"/>
    <property type="evidence" value="ECO:0007669"/>
    <property type="project" value="UniProtKB-UniRule"/>
</dbReference>
<dbReference type="CDD" id="cd00520">
    <property type="entry name" value="RRF"/>
    <property type="match status" value="1"/>
</dbReference>
<dbReference type="FunFam" id="1.10.132.20:FF:000001">
    <property type="entry name" value="Ribosome-recycling factor"/>
    <property type="match status" value="1"/>
</dbReference>
<dbReference type="FunFam" id="3.30.1360.40:FF:000001">
    <property type="entry name" value="Ribosome-recycling factor"/>
    <property type="match status" value="1"/>
</dbReference>
<dbReference type="Gene3D" id="3.30.1360.40">
    <property type="match status" value="1"/>
</dbReference>
<dbReference type="Gene3D" id="1.10.132.20">
    <property type="entry name" value="Ribosome-recycling factor"/>
    <property type="match status" value="1"/>
</dbReference>
<dbReference type="HAMAP" id="MF_00040">
    <property type="entry name" value="RRF"/>
    <property type="match status" value="1"/>
</dbReference>
<dbReference type="InterPro" id="IPR002661">
    <property type="entry name" value="Ribosome_recyc_fac"/>
</dbReference>
<dbReference type="InterPro" id="IPR023584">
    <property type="entry name" value="Ribosome_recyc_fac_dom"/>
</dbReference>
<dbReference type="InterPro" id="IPR036191">
    <property type="entry name" value="RRF_sf"/>
</dbReference>
<dbReference type="NCBIfam" id="TIGR00496">
    <property type="entry name" value="frr"/>
    <property type="match status" value="1"/>
</dbReference>
<dbReference type="PANTHER" id="PTHR20982:SF3">
    <property type="entry name" value="MITOCHONDRIAL RIBOSOME RECYCLING FACTOR PSEUDO 1"/>
    <property type="match status" value="1"/>
</dbReference>
<dbReference type="PANTHER" id="PTHR20982">
    <property type="entry name" value="RIBOSOME RECYCLING FACTOR"/>
    <property type="match status" value="1"/>
</dbReference>
<dbReference type="Pfam" id="PF01765">
    <property type="entry name" value="RRF"/>
    <property type="match status" value="1"/>
</dbReference>
<dbReference type="SUPFAM" id="SSF55194">
    <property type="entry name" value="Ribosome recycling factor, RRF"/>
    <property type="match status" value="1"/>
</dbReference>
<protein>
    <recommendedName>
        <fullName evidence="1">Ribosome-recycling factor</fullName>
        <shortName evidence="1">RRF</shortName>
    </recommendedName>
    <alternativeName>
        <fullName evidence="1">Ribosome-releasing factor</fullName>
    </alternativeName>
</protein>
<organism>
    <name type="scientific">Cyanothece sp. (strain PCC 7425 / ATCC 29141)</name>
    <dbReference type="NCBI Taxonomy" id="395961"/>
    <lineage>
        <taxon>Bacteria</taxon>
        <taxon>Bacillati</taxon>
        <taxon>Cyanobacteriota</taxon>
        <taxon>Cyanophyceae</taxon>
        <taxon>Gomontiellales</taxon>
        <taxon>Cyanothecaceae</taxon>
        <taxon>Cyanothece</taxon>
    </lineage>
</organism>
<comment type="function">
    <text evidence="1">Responsible for the release of ribosomes from messenger RNA at the termination of protein biosynthesis. May increase the efficiency of translation by recycling ribosomes from one round of translation to another.</text>
</comment>
<comment type="subcellular location">
    <subcellularLocation>
        <location evidence="1">Cytoplasm</location>
    </subcellularLocation>
</comment>
<comment type="similarity">
    <text evidence="1">Belongs to the RRF family.</text>
</comment>
<reference key="1">
    <citation type="journal article" date="2011" name="MBio">
        <title>Novel metabolic attributes of the genus Cyanothece, comprising a group of unicellular nitrogen-fixing Cyanobacteria.</title>
        <authorList>
            <person name="Bandyopadhyay A."/>
            <person name="Elvitigala T."/>
            <person name="Welsh E."/>
            <person name="Stockel J."/>
            <person name="Liberton M."/>
            <person name="Min H."/>
            <person name="Sherman L.A."/>
            <person name="Pakrasi H.B."/>
        </authorList>
    </citation>
    <scope>NUCLEOTIDE SEQUENCE [LARGE SCALE GENOMIC DNA]</scope>
    <source>
        <strain>PCC 7425 / ATCC 29141</strain>
    </source>
</reference>
<feature type="chain" id="PRO_1000194918" description="Ribosome-recycling factor">
    <location>
        <begin position="1"/>
        <end position="182"/>
    </location>
</feature>
<keyword id="KW-0963">Cytoplasm</keyword>
<keyword id="KW-0648">Protein biosynthesis</keyword>
<gene>
    <name evidence="1" type="primary">frr</name>
    <name type="ordered locus">Cyan7425_4637</name>
</gene>
<name>RRF_CYAP4</name>
<accession>B8HL79</accession>
<evidence type="ECO:0000255" key="1">
    <source>
        <dbReference type="HAMAP-Rule" id="MF_00040"/>
    </source>
</evidence>